<sequence length="1055" mass="114402">MALKLTSPPSVFSQSRRLSSSSLIPIRSKSTFTGFRSRTGVYLSKTTALQSSTKLSVAAESPAATIATDDWGKVSAVLFDMDGVLCNSEDLSRRAAVDVFTEMGVEVTVDDFVPFMGTGEAKFLGGVASVKEVKGFDPDAAKERFFEIYLDKYAKPESGIGFPGALELVTECKNKGLKVAVASSADRIKVDANLKAAGLSLTMFDAIVSADAFENLKPAPDIFLAAAKILGVPTSECVVIEDALAGVQAAQAANMRCIAVKTTLSEAILKDAGPSMIRDDIGNISINDILTGGSDSTRNSTAMLEENTVSDKTSANGFQGSRRDILRYGSLGIALSCVYFAATNWKAMQYASPKALWNALVGAKSPSFTQNQGEGRVQQFVDYIADLESKQTATTVPEFPSKLDWLNTAPLQFRRDLKGKVVILDFWTYCCINCMHVLPDLEFLEKKYKDMPFTVVGVHSAKFDNEKDLDAIRNAVLRYDISHPVVNDGDMYMWRELGINSWPTFAVVSPNGKVIAQIAGEGHRKDLDDVVAAALTYYGGKNVLDSTPLPTRLEKDNDPRLATSPLKFPGKLAIDTLNNRLFISDSNHNRIIVTDLEGNFIVQIGSSGEEGFQDGSFEDAAFNRPQGLAYNAKKNLLYVADTENHALREIDFVNERVQTLAGNGTKGSDYQGGRKGTKQLLNSPWDVCFEPVNEKVYIAMAGQHQIWEYSVLDGITRVFSGNGYERNLNGSTPQTTSFAQPSGISLGPDLKEAYIADSESSSIRALDLQTGGSRLLAGGDPYFSENLFKFGDNDGVGAEVLLQHPLGVLCANDGQIYLTDSYNHKIKKLDPVTKRVVTLAGTGKAGFKDGKVKGAQLSEPAGLAITENGRLFVADTNNSLIRYIDLNKGEDSEILTLELKGVQPPTPKAKSLKRLRKRASADTKIVKVDSVTSREGDLNLKISLPDGYHFSKEARSKFVVDVEPENAVAIDPTEGTLSPEGSTMLHFIQSSTSASVGKISCKVYYCKEDEVCLYQSVQFEVPFKVESELSASPTITFTVTPRAPDAGGLQLQGTR</sequence>
<reference key="1">
    <citation type="journal article" date="2000" name="Nature">
        <title>Sequence and analysis of chromosome 1 of the plant Arabidopsis thaliana.</title>
        <authorList>
            <person name="Theologis A."/>
            <person name="Ecker J.R."/>
            <person name="Palm C.J."/>
            <person name="Federspiel N.A."/>
            <person name="Kaul S."/>
            <person name="White O."/>
            <person name="Alonso J."/>
            <person name="Altafi H."/>
            <person name="Araujo R."/>
            <person name="Bowman C.L."/>
            <person name="Brooks S.Y."/>
            <person name="Buehler E."/>
            <person name="Chan A."/>
            <person name="Chao Q."/>
            <person name="Chen H."/>
            <person name="Cheuk R.F."/>
            <person name="Chin C.W."/>
            <person name="Chung M.K."/>
            <person name="Conn L."/>
            <person name="Conway A.B."/>
            <person name="Conway A.R."/>
            <person name="Creasy T.H."/>
            <person name="Dewar K."/>
            <person name="Dunn P."/>
            <person name="Etgu P."/>
            <person name="Feldblyum T.V."/>
            <person name="Feng J.-D."/>
            <person name="Fong B."/>
            <person name="Fujii C.Y."/>
            <person name="Gill J.E."/>
            <person name="Goldsmith A.D."/>
            <person name="Haas B."/>
            <person name="Hansen N.F."/>
            <person name="Hughes B."/>
            <person name="Huizar L."/>
            <person name="Hunter J.L."/>
            <person name="Jenkins J."/>
            <person name="Johnson-Hopson C."/>
            <person name="Khan S."/>
            <person name="Khaykin E."/>
            <person name="Kim C.J."/>
            <person name="Koo H.L."/>
            <person name="Kremenetskaia I."/>
            <person name="Kurtz D.B."/>
            <person name="Kwan A."/>
            <person name="Lam B."/>
            <person name="Langin-Hooper S."/>
            <person name="Lee A."/>
            <person name="Lee J.M."/>
            <person name="Lenz C.A."/>
            <person name="Li J.H."/>
            <person name="Li Y.-P."/>
            <person name="Lin X."/>
            <person name="Liu S.X."/>
            <person name="Liu Z.A."/>
            <person name="Luros J.S."/>
            <person name="Maiti R."/>
            <person name="Marziali A."/>
            <person name="Militscher J."/>
            <person name="Miranda M."/>
            <person name="Nguyen M."/>
            <person name="Nierman W.C."/>
            <person name="Osborne B.I."/>
            <person name="Pai G."/>
            <person name="Peterson J."/>
            <person name="Pham P.K."/>
            <person name="Rizzo M."/>
            <person name="Rooney T."/>
            <person name="Rowley D."/>
            <person name="Sakano H."/>
            <person name="Salzberg S.L."/>
            <person name="Schwartz J.R."/>
            <person name="Shinn P."/>
            <person name="Southwick A.M."/>
            <person name="Sun H."/>
            <person name="Tallon L.J."/>
            <person name="Tambunga G."/>
            <person name="Toriumi M.J."/>
            <person name="Town C.D."/>
            <person name="Utterback T."/>
            <person name="Van Aken S."/>
            <person name="Vaysberg M."/>
            <person name="Vysotskaia V.S."/>
            <person name="Walker M."/>
            <person name="Wu D."/>
            <person name="Yu G."/>
            <person name="Fraser C.M."/>
            <person name="Venter J.C."/>
            <person name="Davis R.W."/>
        </authorList>
    </citation>
    <scope>NUCLEOTIDE SEQUENCE [LARGE SCALE GENOMIC DNA]</scope>
    <source>
        <strain>cv. Columbia</strain>
    </source>
</reference>
<reference key="2">
    <citation type="journal article" date="2017" name="Plant J.">
        <title>Araport11: a complete reannotation of the Arabidopsis thaliana reference genome.</title>
        <authorList>
            <person name="Cheng C.Y."/>
            <person name="Krishnakumar V."/>
            <person name="Chan A.P."/>
            <person name="Thibaud-Nissen F."/>
            <person name="Schobel S."/>
            <person name="Town C.D."/>
        </authorList>
    </citation>
    <scope>GENOME REANNOTATION</scope>
    <source>
        <strain>cv. Columbia</strain>
    </source>
</reference>
<reference key="3">
    <citation type="journal article" date="2002" name="Science">
        <title>Functional annotation of a full-length Arabidopsis cDNA collection.</title>
        <authorList>
            <person name="Seki M."/>
            <person name="Narusaka M."/>
            <person name="Kamiya A."/>
            <person name="Ishida J."/>
            <person name="Satou M."/>
            <person name="Sakurai T."/>
            <person name="Nakajima M."/>
            <person name="Enju A."/>
            <person name="Akiyama K."/>
            <person name="Oono Y."/>
            <person name="Muramatsu M."/>
            <person name="Hayashizaki Y."/>
            <person name="Kawai J."/>
            <person name="Carninci P."/>
            <person name="Itoh M."/>
            <person name="Ishii Y."/>
            <person name="Arakawa T."/>
            <person name="Shibata K."/>
            <person name="Shinagawa A."/>
            <person name="Shinozaki K."/>
        </authorList>
    </citation>
    <scope>NUCLEOTIDE SEQUENCE [LARGE SCALE MRNA] (ISOFORM 6)</scope>
    <source>
        <strain>cv. Columbia</strain>
    </source>
</reference>
<reference key="4">
    <citation type="journal article" date="2003" name="Science">
        <title>Empirical analysis of transcriptional activity in the Arabidopsis genome.</title>
        <authorList>
            <person name="Yamada K."/>
            <person name="Lim J."/>
            <person name="Dale J.M."/>
            <person name="Chen H."/>
            <person name="Shinn P."/>
            <person name="Palm C.J."/>
            <person name="Southwick A.M."/>
            <person name="Wu H.C."/>
            <person name="Kim C.J."/>
            <person name="Nguyen M."/>
            <person name="Pham P.K."/>
            <person name="Cheuk R.F."/>
            <person name="Karlin-Newmann G."/>
            <person name="Liu S.X."/>
            <person name="Lam B."/>
            <person name="Sakano H."/>
            <person name="Wu T."/>
            <person name="Yu G."/>
            <person name="Miranda M."/>
            <person name="Quach H.L."/>
            <person name="Tripp M."/>
            <person name="Chang C.H."/>
            <person name="Lee J.M."/>
            <person name="Toriumi M.J."/>
            <person name="Chan M.M."/>
            <person name="Tang C.C."/>
            <person name="Onodera C.S."/>
            <person name="Deng J.M."/>
            <person name="Akiyama K."/>
            <person name="Ansari Y."/>
            <person name="Arakawa T."/>
            <person name="Banh J."/>
            <person name="Banno F."/>
            <person name="Bowser L."/>
            <person name="Brooks S.Y."/>
            <person name="Carninci P."/>
            <person name="Chao Q."/>
            <person name="Choy N."/>
            <person name="Enju A."/>
            <person name="Goldsmith A.D."/>
            <person name="Gurjal M."/>
            <person name="Hansen N.F."/>
            <person name="Hayashizaki Y."/>
            <person name="Johnson-Hopson C."/>
            <person name="Hsuan V.W."/>
            <person name="Iida K."/>
            <person name="Karnes M."/>
            <person name="Khan S."/>
            <person name="Koesema E."/>
            <person name="Ishida J."/>
            <person name="Jiang P.X."/>
            <person name="Jones T."/>
            <person name="Kawai J."/>
            <person name="Kamiya A."/>
            <person name="Meyers C."/>
            <person name="Nakajima M."/>
            <person name="Narusaka M."/>
            <person name="Seki M."/>
            <person name="Sakurai T."/>
            <person name="Satou M."/>
            <person name="Tamse R."/>
            <person name="Vaysberg M."/>
            <person name="Wallender E.K."/>
            <person name="Wong C."/>
            <person name="Yamamura Y."/>
            <person name="Yuan S."/>
            <person name="Shinozaki K."/>
            <person name="Davis R.W."/>
            <person name="Theologis A."/>
            <person name="Ecker J.R."/>
        </authorList>
    </citation>
    <scope>NUCLEOTIDE SEQUENCE [LARGE SCALE MRNA] (ISOFORM 1)</scope>
    <source>
        <strain>cv. Columbia</strain>
    </source>
</reference>
<reference key="5">
    <citation type="journal article" date="2009" name="DNA Res.">
        <title>Analysis of multiple occurrences of alternative splicing events in Arabidopsis thaliana using novel sequenced full-length cDNAs.</title>
        <authorList>
            <person name="Iida K."/>
            <person name="Fukami-Kobayashi K."/>
            <person name="Toyoda A."/>
            <person name="Sakaki Y."/>
            <person name="Kobayashi M."/>
            <person name="Seki M."/>
            <person name="Shinozaki K."/>
        </authorList>
    </citation>
    <scope>NUCLEOTIDE SEQUENCE [LARGE SCALE MRNA] (ISOFORM 5)</scope>
    <source>
        <strain>cv. Columbia</strain>
        <tissue>Rosette leaf</tissue>
    </source>
</reference>
<reference key="6">
    <citation type="submission" date="2006-07" db="EMBL/GenBank/DDBJ databases">
        <title>Large-scale analysis of RIKEN Arabidopsis full-length (RAFL) cDNAs.</title>
        <authorList>
            <person name="Totoki Y."/>
            <person name="Seki M."/>
            <person name="Ishida J."/>
            <person name="Nakajima M."/>
            <person name="Enju A."/>
            <person name="Kamiya A."/>
            <person name="Narusaka M."/>
            <person name="Shin-i T."/>
            <person name="Nakagawa M."/>
            <person name="Sakamoto N."/>
            <person name="Oishi K."/>
            <person name="Kohara Y."/>
            <person name="Kobayashi M."/>
            <person name="Toyoda A."/>
            <person name="Sakaki Y."/>
            <person name="Sakurai T."/>
            <person name="Iida K."/>
            <person name="Akiyama K."/>
            <person name="Satou M."/>
            <person name="Toyoda T."/>
            <person name="Konagaya A."/>
            <person name="Carninci P."/>
            <person name="Kawai J."/>
            <person name="Hayashizaki Y."/>
            <person name="Shinozaki K."/>
        </authorList>
    </citation>
    <scope>NUCLEOTIDE SEQUENCE [LARGE SCALE MRNA] (ISOFORM 4)</scope>
    <source>
        <strain>cv. Columbia</strain>
    </source>
</reference>
<reference key="7">
    <citation type="submission" date="2002-03" db="EMBL/GenBank/DDBJ databases">
        <title>Full-length cDNA from Arabidopsis thaliana.</title>
        <authorList>
            <person name="Brover V.V."/>
            <person name="Troukhan M.E."/>
            <person name="Alexandrov N.A."/>
            <person name="Lu Y.-P."/>
            <person name="Flavell R.B."/>
            <person name="Feldmann K.A."/>
        </authorList>
    </citation>
    <scope>NUCLEOTIDE SEQUENCE [LARGE SCALE MRNA] (ISOFORM 4)</scope>
</reference>
<reference key="8">
    <citation type="journal article" date="2012" name="Mol. Cell. Proteomics">
        <title>Comparative large-scale characterisation of plant vs. mammal proteins reveals similar and idiosyncratic N-alpha acetylation features.</title>
        <authorList>
            <person name="Bienvenut W.V."/>
            <person name="Sumpton D."/>
            <person name="Martinez A."/>
            <person name="Lilla S."/>
            <person name="Espagne C."/>
            <person name="Meinnel T."/>
            <person name="Giglione C."/>
        </authorList>
    </citation>
    <scope>ACETYLATION [LARGE SCALE ANALYSIS] AT VAL-57</scope>
    <scope>CLEAVAGE OF TRANSIT PEPTIDE [LARGE SCALE ANALYSIS] AFTER SER-56</scope>
    <scope>IDENTIFICATION BY MASS SPECTROMETRY [LARGE SCALE ANALYSIS]</scope>
</reference>
<reference key="9">
    <citation type="journal article" date="2013" name="Proc. Natl. Acad. Sci. U.S.A.">
        <title>A thioredoxin-like/beta-propeller protein maintains the efficiency of light harvesting in Arabidopsis.</title>
        <authorList>
            <person name="Brooks M.D."/>
            <person name="Sylak-Glassman E.J."/>
            <person name="Fleming G.R."/>
            <person name="Niyogi K.K."/>
        </authorList>
    </citation>
    <scope>FUNCTION</scope>
    <scope>DISRUPTION PHENOTYPE</scope>
    <scope>MUTAGENESIS OF ASP-80; 431-CYS--CYS-434 AND GLU-859</scope>
    <scope>SUBCELLULAR LOCATION</scope>
    <source>
        <strain>cv. Columbia</strain>
    </source>
</reference>
<comment type="function">
    <text evidence="6">Required to maintain light harvesting efficiency, especially during nonphotochemical quenching (NPQ) recovery, via the regulation of chlorophyll excited-state lifetime probably by preventing the formation of a slowly reversible form of antenna quenching.</text>
</comment>
<comment type="cofactor">
    <cofactor evidence="1">
        <name>Mg(2+)</name>
        <dbReference type="ChEBI" id="CHEBI:18420"/>
    </cofactor>
</comment>
<comment type="subcellular location">
    <subcellularLocation>
        <location evidence="6">Plastid</location>
        <location evidence="6">Chloroplast thylakoid membrane</location>
        <topology evidence="3">Single-pass membrane protein</topology>
    </subcellularLocation>
    <text evidence="6">Mostly localized in thylakoid grana margins, and, to a lower extent, in grana and stroma lamellae.</text>
</comment>
<comment type="alternative products">
    <event type="alternative splicing"/>
    <isoform>
        <id>Q8VZ10-1</id>
        <name>1</name>
        <sequence type="displayed"/>
    </isoform>
    <isoform>
        <id>Q8VZ10-2</id>
        <name>2</name>
        <sequence type="described" ref="VSP_059050"/>
    </isoform>
    <isoform>
        <id>Q8VZ10-3</id>
        <name>3</name>
        <sequence type="described" ref="VSP_059046"/>
    </isoform>
    <isoform>
        <id>Q8VZ10-4</id>
        <name>4</name>
        <sequence type="described" ref="VSP_059048 VSP_059049"/>
    </isoform>
    <isoform>
        <id>Q8VZ10-5</id>
        <name>5</name>
        <sequence type="described" ref="VSP_059047"/>
    </isoform>
    <isoform>
        <id>Q8VZ10-6</id>
        <name>6</name>
        <sequence type="described" ref="VSP_059046 VSP_059048 VSP_059049"/>
    </isoform>
</comment>
<comment type="disruption phenotype">
    <text evidence="6">High light intensity-dependent and irreversible nonphotochemical quenching (NPQ) due to a decrease in chlorophyll excited-state lifetime.</text>
</comment>
<comment type="similarity">
    <text evidence="8">In the N-terminal section; belongs to the HAD-like hydrolase superfamily.</text>
</comment>
<comment type="similarity">
    <text evidence="8">In the C-terminal section; belongs to the thioredoxin family.</text>
</comment>
<comment type="sequence caution" evidence="8">
    <conflict type="erroneous gene model prediction">
        <sequence resource="EMBL-CDS" id="AAG51506"/>
    </conflict>
</comment>
<gene>
    <name evidence="7" type="primary">SOQ1</name>
    <name evidence="9" type="ordered locus">At1g56500</name>
    <name evidence="10" type="ORF">F13N6.21</name>
</gene>
<protein>
    <recommendedName>
        <fullName evidence="7">Protein SUPPRESSOR OF QUENCHING 1, chloroplastic</fullName>
        <ecNumber evidence="1">3.1.3.-</ecNumber>
    </recommendedName>
</protein>
<dbReference type="EC" id="3.1.3.-" evidence="1"/>
<dbReference type="EMBL" id="AC058785">
    <property type="protein sequence ID" value="AAG51506.1"/>
    <property type="status" value="ALT_SEQ"/>
    <property type="molecule type" value="Genomic_DNA"/>
</dbReference>
<dbReference type="EMBL" id="CP002684">
    <property type="protein sequence ID" value="AEE33400.1"/>
    <property type="molecule type" value="Genomic_DNA"/>
</dbReference>
<dbReference type="EMBL" id="CP002684">
    <property type="protein sequence ID" value="ANM58700.1"/>
    <property type="molecule type" value="Genomic_DNA"/>
</dbReference>
<dbReference type="EMBL" id="CP002684">
    <property type="protein sequence ID" value="ANM58701.1"/>
    <property type="molecule type" value="Genomic_DNA"/>
</dbReference>
<dbReference type="EMBL" id="AK118507">
    <property type="protein sequence ID" value="BAC43111.1"/>
    <property type="molecule type" value="mRNA"/>
</dbReference>
<dbReference type="EMBL" id="AY065399">
    <property type="protein sequence ID" value="AAL38840.1"/>
    <property type="molecule type" value="mRNA"/>
</dbReference>
<dbReference type="EMBL" id="AK318692">
    <property type="protein sequence ID" value="BAH56807.1"/>
    <property type="molecule type" value="mRNA"/>
</dbReference>
<dbReference type="EMBL" id="AK228839">
    <property type="protein sequence ID" value="BAF00734.1"/>
    <property type="molecule type" value="mRNA"/>
</dbReference>
<dbReference type="EMBL" id="AY088165">
    <property type="protein sequence ID" value="AAM65709.1"/>
    <property type="molecule type" value="mRNA"/>
</dbReference>
<dbReference type="PIR" id="F96606">
    <property type="entry name" value="F96606"/>
</dbReference>
<dbReference type="RefSeq" id="NP_001321116.1">
    <molecule id="Q8VZ10-2"/>
    <property type="nucleotide sequence ID" value="NM_001333783.1"/>
</dbReference>
<dbReference type="RefSeq" id="NP_001321117.1">
    <molecule id="Q8VZ10-3"/>
    <property type="nucleotide sequence ID" value="NM_001333784.1"/>
</dbReference>
<dbReference type="RefSeq" id="NP_564718.2">
    <molecule id="Q8VZ10-1"/>
    <property type="nucleotide sequence ID" value="NM_104525.3"/>
</dbReference>
<dbReference type="PDB" id="7DJJ">
    <property type="method" value="X-ray"/>
    <property type="resolution" value="2.70 A"/>
    <property type="chains" value="A=391-1055"/>
</dbReference>
<dbReference type="PDB" id="7DJK">
    <property type="method" value="X-ray"/>
    <property type="resolution" value="2.80 A"/>
    <property type="chains" value="A=391-1055"/>
</dbReference>
<dbReference type="PDB" id="7DJL">
    <property type="method" value="X-ray"/>
    <property type="resolution" value="2.96 A"/>
    <property type="chains" value="A/B/C=560-1055"/>
</dbReference>
<dbReference type="PDB" id="7DJM">
    <property type="method" value="X-ray"/>
    <property type="resolution" value="1.70 A"/>
    <property type="chains" value="A=560-1055"/>
</dbReference>
<dbReference type="PDBsum" id="7DJJ"/>
<dbReference type="PDBsum" id="7DJK"/>
<dbReference type="PDBsum" id="7DJL"/>
<dbReference type="PDBsum" id="7DJM"/>
<dbReference type="SMR" id="Q8VZ10"/>
<dbReference type="FunCoup" id="Q8VZ10">
    <property type="interactions" value="3047"/>
</dbReference>
<dbReference type="STRING" id="3702.Q8VZ10"/>
<dbReference type="GlyGen" id="Q8VZ10">
    <property type="glycosylation" value="1 site"/>
</dbReference>
<dbReference type="iPTMnet" id="Q8VZ10"/>
<dbReference type="PaxDb" id="3702-AT1G56500.1"/>
<dbReference type="ProteomicsDB" id="245325">
    <molecule id="Q8VZ10-1"/>
</dbReference>
<dbReference type="EnsemblPlants" id="AT1G56500.1">
    <molecule id="Q8VZ10-1"/>
    <property type="protein sequence ID" value="AT1G56500.1"/>
    <property type="gene ID" value="AT1G56500"/>
</dbReference>
<dbReference type="EnsemblPlants" id="AT1G56500.2">
    <molecule id="Q8VZ10-2"/>
    <property type="protein sequence ID" value="AT1G56500.2"/>
    <property type="gene ID" value="AT1G56500"/>
</dbReference>
<dbReference type="EnsemblPlants" id="AT1G56500.3">
    <molecule id="Q8VZ10-3"/>
    <property type="protein sequence ID" value="AT1G56500.3"/>
    <property type="gene ID" value="AT1G56500"/>
</dbReference>
<dbReference type="GeneID" id="842103"/>
<dbReference type="Gramene" id="AT1G56500.1">
    <molecule id="Q8VZ10-1"/>
    <property type="protein sequence ID" value="AT1G56500.1"/>
    <property type="gene ID" value="AT1G56500"/>
</dbReference>
<dbReference type="Gramene" id="AT1G56500.2">
    <molecule id="Q8VZ10-2"/>
    <property type="protein sequence ID" value="AT1G56500.2"/>
    <property type="gene ID" value="AT1G56500"/>
</dbReference>
<dbReference type="Gramene" id="AT1G56500.3">
    <molecule id="Q8VZ10-3"/>
    <property type="protein sequence ID" value="AT1G56500.3"/>
    <property type="gene ID" value="AT1G56500"/>
</dbReference>
<dbReference type="KEGG" id="ath:AT1G56500"/>
<dbReference type="Araport" id="AT1G56500"/>
<dbReference type="TAIR" id="AT1G56500">
    <property type="gene designation" value="SOQ1"/>
</dbReference>
<dbReference type="eggNOG" id="KOG2177">
    <property type="taxonomic scope" value="Eukaryota"/>
</dbReference>
<dbReference type="eggNOG" id="KOG2914">
    <property type="taxonomic scope" value="Eukaryota"/>
</dbReference>
<dbReference type="HOGENOM" id="CLU_312014_0_0_1"/>
<dbReference type="InParanoid" id="Q8VZ10"/>
<dbReference type="OMA" id="LITQCKN"/>
<dbReference type="PhylomeDB" id="Q8VZ10"/>
<dbReference type="PRO" id="PR:Q8VZ10"/>
<dbReference type="Proteomes" id="UP000006548">
    <property type="component" value="Chromosome 1"/>
</dbReference>
<dbReference type="ExpressionAtlas" id="Q8VZ10">
    <property type="expression patterns" value="baseline and differential"/>
</dbReference>
<dbReference type="GO" id="GO:0009507">
    <property type="term" value="C:chloroplast"/>
    <property type="evidence" value="ECO:0007005"/>
    <property type="project" value="TAIR"/>
</dbReference>
<dbReference type="GO" id="GO:0009570">
    <property type="term" value="C:chloroplast stroma"/>
    <property type="evidence" value="ECO:0007005"/>
    <property type="project" value="TAIR"/>
</dbReference>
<dbReference type="GO" id="GO:0009534">
    <property type="term" value="C:chloroplast thylakoid"/>
    <property type="evidence" value="ECO:0007005"/>
    <property type="project" value="TAIR"/>
</dbReference>
<dbReference type="GO" id="GO:0009535">
    <property type="term" value="C:chloroplast thylakoid membrane"/>
    <property type="evidence" value="ECO:0007669"/>
    <property type="project" value="UniProtKB-SubCell"/>
</dbReference>
<dbReference type="GO" id="GO:0005634">
    <property type="term" value="C:nucleus"/>
    <property type="evidence" value="ECO:0007005"/>
    <property type="project" value="TAIR"/>
</dbReference>
<dbReference type="GO" id="GO:0042651">
    <property type="term" value="C:thylakoid membrane"/>
    <property type="evidence" value="ECO:0000314"/>
    <property type="project" value="TAIR"/>
</dbReference>
<dbReference type="GO" id="GO:0016787">
    <property type="term" value="F:hydrolase activity"/>
    <property type="evidence" value="ECO:0007669"/>
    <property type="project" value="UniProtKB-KW"/>
</dbReference>
<dbReference type="GO" id="GO:0046872">
    <property type="term" value="F:metal ion binding"/>
    <property type="evidence" value="ECO:0007669"/>
    <property type="project" value="UniProtKB-KW"/>
</dbReference>
<dbReference type="GO" id="GO:0010196">
    <property type="term" value="P:nonphotochemical quenching"/>
    <property type="evidence" value="ECO:0000315"/>
    <property type="project" value="TAIR"/>
</dbReference>
<dbReference type="CDD" id="cd07505">
    <property type="entry name" value="HAD_BPGM-like"/>
    <property type="match status" value="1"/>
</dbReference>
<dbReference type="CDD" id="cd14951">
    <property type="entry name" value="NHL-2_like"/>
    <property type="match status" value="1"/>
</dbReference>
<dbReference type="FunFam" id="2.120.10.30:FF:000123">
    <property type="entry name" value="Chloroplast protein HCF243"/>
    <property type="match status" value="1"/>
</dbReference>
<dbReference type="FunFam" id="1.10.150.240:FF:000041">
    <property type="entry name" value="Haloacid dehalogenase-like hydrolase domain-containing protein"/>
    <property type="match status" value="1"/>
</dbReference>
<dbReference type="FunFam" id="2.120.10.30:FF:000081">
    <property type="entry name" value="NHL repeat-containing protein 2"/>
    <property type="match status" value="1"/>
</dbReference>
<dbReference type="FunFam" id="3.40.30.10:FF:000320">
    <property type="entry name" value="NHL repeat-containing protein 2"/>
    <property type="match status" value="1"/>
</dbReference>
<dbReference type="Gene3D" id="3.40.30.10">
    <property type="entry name" value="Glutaredoxin"/>
    <property type="match status" value="1"/>
</dbReference>
<dbReference type="Gene3D" id="3.40.50.1000">
    <property type="entry name" value="HAD superfamily/HAD-like"/>
    <property type="match status" value="1"/>
</dbReference>
<dbReference type="Gene3D" id="1.10.150.240">
    <property type="entry name" value="Putative phosphatase, domain 2"/>
    <property type="match status" value="1"/>
</dbReference>
<dbReference type="Gene3D" id="2.120.10.30">
    <property type="entry name" value="TolB, C-terminal domain"/>
    <property type="match status" value="2"/>
</dbReference>
<dbReference type="InterPro" id="IPR011042">
    <property type="entry name" value="6-blade_b-propeller_TolB-like"/>
</dbReference>
<dbReference type="InterPro" id="IPR036412">
    <property type="entry name" value="HAD-like_sf"/>
</dbReference>
<dbReference type="InterPro" id="IPR006439">
    <property type="entry name" value="HAD-SF_hydro_IA"/>
</dbReference>
<dbReference type="InterPro" id="IPR041492">
    <property type="entry name" value="HAD_2"/>
</dbReference>
<dbReference type="InterPro" id="IPR023214">
    <property type="entry name" value="HAD_sf"/>
</dbReference>
<dbReference type="InterPro" id="IPR000033">
    <property type="entry name" value="LDLR_classB_rpt"/>
</dbReference>
<dbReference type="InterPro" id="IPR045302">
    <property type="entry name" value="NHL2_NHL_rpt_dom"/>
</dbReference>
<dbReference type="InterPro" id="IPR001258">
    <property type="entry name" value="NHL_repeat"/>
</dbReference>
<dbReference type="InterPro" id="IPR023198">
    <property type="entry name" value="PGP-like_dom2"/>
</dbReference>
<dbReference type="InterPro" id="IPR012336">
    <property type="entry name" value="Thioredoxin-like_fold"/>
</dbReference>
<dbReference type="InterPro" id="IPR036249">
    <property type="entry name" value="Thioredoxin-like_sf"/>
</dbReference>
<dbReference type="InterPro" id="IPR013766">
    <property type="entry name" value="Thioredoxin_domain"/>
</dbReference>
<dbReference type="NCBIfam" id="TIGR01509">
    <property type="entry name" value="HAD-SF-IA-v3"/>
    <property type="match status" value="1"/>
</dbReference>
<dbReference type="PANTHER" id="PTHR46388">
    <property type="entry name" value="NHL REPEAT-CONTAINING PROTEIN 2"/>
    <property type="match status" value="1"/>
</dbReference>
<dbReference type="PANTHER" id="PTHR46388:SF2">
    <property type="entry name" value="NHL REPEAT-CONTAINING PROTEIN 2"/>
    <property type="match status" value="1"/>
</dbReference>
<dbReference type="Pfam" id="PF13419">
    <property type="entry name" value="HAD_2"/>
    <property type="match status" value="1"/>
</dbReference>
<dbReference type="Pfam" id="PF01436">
    <property type="entry name" value="NHL"/>
    <property type="match status" value="2"/>
</dbReference>
<dbReference type="Pfam" id="PF13905">
    <property type="entry name" value="Thioredoxin_8"/>
    <property type="match status" value="1"/>
</dbReference>
<dbReference type="PRINTS" id="PR00413">
    <property type="entry name" value="HADHALOGNASE"/>
</dbReference>
<dbReference type="SFLD" id="SFLDG01135">
    <property type="entry name" value="C1.5.6:_HAD__Beta-PGM__Phospha"/>
    <property type="match status" value="1"/>
</dbReference>
<dbReference type="SFLD" id="SFLDG01129">
    <property type="entry name" value="C1.5:_HAD__Beta-PGM__Phosphata"/>
    <property type="match status" value="1"/>
</dbReference>
<dbReference type="SMART" id="SM00135">
    <property type="entry name" value="LY"/>
    <property type="match status" value="2"/>
</dbReference>
<dbReference type="SUPFAM" id="SSF56784">
    <property type="entry name" value="HAD-like"/>
    <property type="match status" value="1"/>
</dbReference>
<dbReference type="SUPFAM" id="SSF101898">
    <property type="entry name" value="NHL repeat"/>
    <property type="match status" value="1"/>
</dbReference>
<dbReference type="SUPFAM" id="SSF52833">
    <property type="entry name" value="Thioredoxin-like"/>
    <property type="match status" value="1"/>
</dbReference>
<dbReference type="PROSITE" id="PS51352">
    <property type="entry name" value="THIOREDOXIN_2"/>
    <property type="match status" value="1"/>
</dbReference>
<organism>
    <name type="scientific">Arabidopsis thaliana</name>
    <name type="common">Mouse-ear cress</name>
    <dbReference type="NCBI Taxonomy" id="3702"/>
    <lineage>
        <taxon>Eukaryota</taxon>
        <taxon>Viridiplantae</taxon>
        <taxon>Streptophyta</taxon>
        <taxon>Embryophyta</taxon>
        <taxon>Tracheophyta</taxon>
        <taxon>Spermatophyta</taxon>
        <taxon>Magnoliopsida</taxon>
        <taxon>eudicotyledons</taxon>
        <taxon>Gunneridae</taxon>
        <taxon>Pentapetalae</taxon>
        <taxon>rosids</taxon>
        <taxon>malvids</taxon>
        <taxon>Brassicales</taxon>
        <taxon>Brassicaceae</taxon>
        <taxon>Camelineae</taxon>
        <taxon>Arabidopsis</taxon>
    </lineage>
</organism>
<feature type="transit peptide" description="Chloroplast" evidence="11">
    <location>
        <begin position="1"/>
        <end position="56"/>
    </location>
</feature>
<feature type="chain" id="PRO_0000441235" description="Protein SUPPRESSOR OF QUENCHING 1, chloroplastic">
    <location>
        <begin position="57"/>
        <end position="1055"/>
    </location>
</feature>
<feature type="topological domain" description="Stromal" evidence="6">
    <location>
        <begin position="59"/>
        <end position="327"/>
    </location>
</feature>
<feature type="transmembrane region" description="Helical" evidence="3">
    <location>
        <begin position="328"/>
        <end position="345"/>
    </location>
</feature>
<feature type="topological domain" description="Lumenal" evidence="6">
    <location>
        <begin position="346"/>
        <end position="1055"/>
    </location>
</feature>
<feature type="domain" description="Thioredoxin" evidence="5">
    <location>
        <begin position="359"/>
        <end position="536"/>
    </location>
</feature>
<feature type="repeat" description="NHL 1" evidence="4">
    <location>
        <begin position="565"/>
        <end position="597"/>
    </location>
</feature>
<feature type="repeat" description="NHL 2" evidence="4">
    <location>
        <begin position="611"/>
        <end position="647"/>
    </location>
</feature>
<feature type="repeat" description="NHL 3" evidence="4">
    <location>
        <begin position="673"/>
        <end position="712"/>
    </location>
</feature>
<feature type="repeat" description="NHL 4" evidence="4">
    <location>
        <begin position="802"/>
        <end position="832"/>
    </location>
</feature>
<feature type="repeat" description="NHL 5" evidence="4">
    <location>
        <begin position="854"/>
        <end position="887"/>
    </location>
</feature>
<feature type="active site" description="Nucleophile" evidence="2">
    <location>
        <position position="80"/>
    </location>
</feature>
<feature type="active site" description="Proton donor" evidence="2">
    <location>
        <position position="82"/>
    </location>
</feature>
<feature type="binding site" evidence="2">
    <location>
        <position position="80"/>
    </location>
    <ligand>
        <name>Mg(2+)</name>
        <dbReference type="ChEBI" id="CHEBI:18420"/>
    </ligand>
</feature>
<feature type="binding site" evidence="1">
    <location>
        <position position="80"/>
    </location>
    <ligand>
        <name>substrate</name>
    </ligand>
</feature>
<feature type="binding site" evidence="2">
    <location>
        <position position="82"/>
    </location>
    <ligand>
        <name>Mg(2+)</name>
        <dbReference type="ChEBI" id="CHEBI:18420"/>
    </ligand>
</feature>
<feature type="binding site" evidence="1">
    <location>
        <position position="89"/>
    </location>
    <ligand>
        <name>substrate</name>
    </ligand>
</feature>
<feature type="binding site" evidence="1">
    <location>
        <begin position="118"/>
        <end position="122"/>
    </location>
    <ligand>
        <name>substrate</name>
    </ligand>
</feature>
<feature type="binding site" evidence="1">
    <location>
        <begin position="141"/>
        <end position="144"/>
    </location>
    <ligand>
        <name>substrate</name>
    </ligand>
</feature>
<feature type="binding site" evidence="1">
    <location>
        <begin position="183"/>
        <end position="189"/>
    </location>
    <ligand>
        <name>substrate</name>
    </ligand>
</feature>
<feature type="binding site" evidence="2">
    <location>
        <position position="242"/>
    </location>
    <ligand>
        <name>Mg(2+)</name>
        <dbReference type="ChEBI" id="CHEBI:18420"/>
    </ligand>
</feature>
<feature type="modified residue" description="N-acetylvaline" evidence="11">
    <location>
        <position position="57"/>
    </location>
</feature>
<feature type="disulfide bond" description="Redox-active" evidence="5">
    <location>
        <begin position="431"/>
        <end position="434"/>
    </location>
</feature>
<feature type="splice variant" id="VSP_059046" description="In isoform 3 and isoform 6.">
    <location>
        <begin position="1"/>
        <end position="202"/>
    </location>
</feature>
<feature type="splice variant" id="VSP_059047" description="In isoform 5.">
    <location>
        <begin position="237"/>
        <end position="1055"/>
    </location>
</feature>
<feature type="splice variant" id="VSP_059048" description="In isoform 4 and isoform 6.">
    <original>RN</original>
    <variation>SM</variation>
    <location>
        <begin position="298"/>
        <end position="299"/>
    </location>
</feature>
<feature type="splice variant" id="VSP_059049" description="In isoform 4 and isoform 6.">
    <location>
        <begin position="300"/>
        <end position="1055"/>
    </location>
</feature>
<feature type="splice variant" id="VSP_059050" description="In isoform 2.">
    <original>RLFVADTNNSLIRYIDLNKGEDSEILTLELKGVQPPTPKAKSLKRLRKRASADTKIVKVDSVTSREGDLNLKISLPDGYHFSKEARSKFVVDVEPENAVAIDPTEGTLSPEGSTMLHFIQSSTSASVGKISCKVYYCKEDEVCLYQSVQFEVPFKVESELSASPTITFTVTPRAPDAGGLQLQGTR</original>
    <variation>NFLVLFNSY</variation>
    <location>
        <begin position="870"/>
        <end position="1055"/>
    </location>
</feature>
<feature type="mutagenesis site" description="Complete rescue in complementation test of the nonphotochemical quenching (NPQ) phenotype observed in disrupted plants." evidence="6">
    <original>D</original>
    <variation>N</variation>
    <location>
        <position position="80"/>
    </location>
</feature>
<feature type="mutagenesis site" description="No rescue in complementation test of the nonphotochemical quenching (NPQ) phenotype observed in disrupted plants." evidence="6">
    <original>CINC</original>
    <variation>SINS</variation>
    <location>
        <begin position="431"/>
        <end position="434"/>
    </location>
</feature>
<feature type="mutagenesis site" description="In soq1-2; high light intensity-dependent and irreversible nonphotochemical quenching (NPQ) due to a decrease in chlorophyll excited-state lifetime." evidence="6">
    <original>E</original>
    <variation>K</variation>
    <location>
        <position position="859"/>
    </location>
</feature>
<feature type="sequence conflict" description="In Ref. 7; AAM65709." evidence="8" ref="7">
    <original>E</original>
    <variation>K</variation>
    <location>
        <position position="143"/>
    </location>
</feature>
<feature type="strand" evidence="13">
    <location>
        <begin position="405"/>
        <end position="409"/>
    </location>
</feature>
<feature type="turn" evidence="13">
    <location>
        <begin position="413"/>
        <end position="416"/>
    </location>
</feature>
<feature type="strand" evidence="13">
    <location>
        <begin position="420"/>
        <end position="427"/>
    </location>
</feature>
<feature type="helix" evidence="13">
    <location>
        <begin position="432"/>
        <end position="447"/>
    </location>
</feature>
<feature type="turn" evidence="13">
    <location>
        <begin position="448"/>
        <end position="450"/>
    </location>
</feature>
<feature type="strand" evidence="13">
    <location>
        <begin position="451"/>
        <end position="459"/>
    </location>
</feature>
<feature type="helix" evidence="13">
    <location>
        <begin position="464"/>
        <end position="467"/>
    </location>
</feature>
<feature type="helix" evidence="13">
    <location>
        <begin position="469"/>
        <end position="478"/>
    </location>
</feature>
<feature type="helix" evidence="13">
    <location>
        <begin position="492"/>
        <end position="497"/>
    </location>
</feature>
<feature type="strand" evidence="13">
    <location>
        <begin position="501"/>
        <end position="508"/>
    </location>
</feature>
<feature type="strand" evidence="13">
    <location>
        <begin position="512"/>
        <end position="522"/>
    </location>
</feature>
<feature type="helix" evidence="13">
    <location>
        <begin position="524"/>
        <end position="540"/>
    </location>
</feature>
<feature type="helix" evidence="13">
    <location>
        <begin position="554"/>
        <end position="556"/>
    </location>
</feature>
<feature type="turn" evidence="15">
    <location>
        <begin position="560"/>
        <end position="563"/>
    </location>
</feature>
<feature type="strand" evidence="15">
    <location>
        <begin position="572"/>
        <end position="575"/>
    </location>
</feature>
<feature type="turn" evidence="15">
    <location>
        <begin position="576"/>
        <end position="579"/>
    </location>
</feature>
<feature type="strand" evidence="15">
    <location>
        <begin position="580"/>
        <end position="585"/>
    </location>
</feature>
<feature type="helix" evidence="15">
    <location>
        <begin position="586"/>
        <end position="588"/>
    </location>
</feature>
<feature type="strand" evidence="15">
    <location>
        <begin position="590"/>
        <end position="595"/>
    </location>
</feature>
<feature type="strand" evidence="15">
    <location>
        <begin position="599"/>
        <end position="604"/>
    </location>
</feature>
<feature type="turn" evidence="15">
    <location>
        <begin position="617"/>
        <end position="619"/>
    </location>
</feature>
<feature type="strand" evidence="15">
    <location>
        <begin position="628"/>
        <end position="631"/>
    </location>
</feature>
<feature type="turn" evidence="15">
    <location>
        <begin position="632"/>
        <end position="635"/>
    </location>
</feature>
<feature type="strand" evidence="15">
    <location>
        <begin position="636"/>
        <end position="641"/>
    </location>
</feature>
<feature type="helix" evidence="15">
    <location>
        <begin position="642"/>
        <end position="644"/>
    </location>
</feature>
<feature type="strand" evidence="15">
    <location>
        <begin position="646"/>
        <end position="651"/>
    </location>
</feature>
<feature type="turn" evidence="15">
    <location>
        <begin position="652"/>
        <end position="655"/>
    </location>
</feature>
<feature type="strand" evidence="15">
    <location>
        <begin position="656"/>
        <end position="662"/>
    </location>
</feature>
<feature type="strand" evidence="15">
    <location>
        <begin position="664"/>
        <end position="666"/>
    </location>
</feature>
<feature type="strand" evidence="15">
    <location>
        <begin position="670"/>
        <end position="675"/>
    </location>
</feature>
<feature type="helix" evidence="15">
    <location>
        <begin position="676"/>
        <end position="678"/>
    </location>
</feature>
<feature type="strand" evidence="15">
    <location>
        <begin position="684"/>
        <end position="690"/>
    </location>
</feature>
<feature type="turn" evidence="15">
    <location>
        <begin position="691"/>
        <end position="694"/>
    </location>
</feature>
<feature type="strand" evidence="15">
    <location>
        <begin position="695"/>
        <end position="700"/>
    </location>
</feature>
<feature type="helix" evidence="15">
    <location>
        <begin position="701"/>
        <end position="703"/>
    </location>
</feature>
<feature type="strand" evidence="15">
    <location>
        <begin position="705"/>
        <end position="710"/>
    </location>
</feature>
<feature type="turn" evidence="15">
    <location>
        <begin position="711"/>
        <end position="713"/>
    </location>
</feature>
<feature type="strand" evidence="15">
    <location>
        <begin position="715"/>
        <end position="720"/>
    </location>
</feature>
<feature type="strand" evidence="12">
    <location>
        <begin position="723"/>
        <end position="726"/>
    </location>
</feature>
<feature type="helix" evidence="15">
    <location>
        <begin position="733"/>
        <end position="735"/>
    </location>
</feature>
<feature type="strand" evidence="15">
    <location>
        <begin position="739"/>
        <end position="746"/>
    </location>
</feature>
<feature type="strand" evidence="15">
    <location>
        <begin position="750"/>
        <end position="757"/>
    </location>
</feature>
<feature type="helix" evidence="15">
    <location>
        <begin position="758"/>
        <end position="760"/>
    </location>
</feature>
<feature type="strand" evidence="15">
    <location>
        <begin position="762"/>
        <end position="767"/>
    </location>
</feature>
<feature type="turn" evidence="15">
    <location>
        <begin position="768"/>
        <end position="770"/>
    </location>
</feature>
<feature type="strand" evidence="15">
    <location>
        <begin position="773"/>
        <end position="779"/>
    </location>
</feature>
<feature type="strand" evidence="14">
    <location>
        <begin position="784"/>
        <end position="787"/>
    </location>
</feature>
<feature type="helix" evidence="15">
    <location>
        <begin position="797"/>
        <end position="799"/>
    </location>
</feature>
<feature type="strand" evidence="15">
    <location>
        <begin position="807"/>
        <end position="810"/>
    </location>
</feature>
<feature type="strand" evidence="15">
    <location>
        <begin position="816"/>
        <end position="820"/>
    </location>
</feature>
<feature type="helix" evidence="15">
    <location>
        <begin position="821"/>
        <end position="823"/>
    </location>
</feature>
<feature type="strand" evidence="15">
    <location>
        <begin position="825"/>
        <end position="830"/>
    </location>
</feature>
<feature type="turn" evidence="15">
    <location>
        <begin position="831"/>
        <end position="834"/>
    </location>
</feature>
<feature type="strand" evidence="15">
    <location>
        <begin position="835"/>
        <end position="840"/>
    </location>
</feature>
<feature type="strand" evidence="12">
    <location>
        <begin position="843"/>
        <end position="846"/>
    </location>
</feature>
<feature type="helix" evidence="15">
    <location>
        <begin position="852"/>
        <end position="854"/>
    </location>
</feature>
<feature type="strand" evidence="15">
    <location>
        <begin position="858"/>
        <end position="865"/>
    </location>
</feature>
<feature type="strand" evidence="15">
    <location>
        <begin position="869"/>
        <end position="875"/>
    </location>
</feature>
<feature type="helix" evidence="15">
    <location>
        <begin position="876"/>
        <end position="878"/>
    </location>
</feature>
<feature type="strand" evidence="15">
    <location>
        <begin position="880"/>
        <end position="885"/>
    </location>
</feature>
<feature type="helix" evidence="15">
    <location>
        <begin position="886"/>
        <end position="891"/>
    </location>
</feature>
<feature type="strand" evidence="15">
    <location>
        <begin position="893"/>
        <end position="896"/>
    </location>
</feature>
<feature type="strand" evidence="15">
    <location>
        <begin position="924"/>
        <end position="927"/>
    </location>
</feature>
<feature type="strand" evidence="15">
    <location>
        <begin position="931"/>
        <end position="942"/>
    </location>
</feature>
<feature type="strand" evidence="15">
    <location>
        <begin position="952"/>
        <end position="954"/>
    </location>
</feature>
<feature type="strand" evidence="15">
    <location>
        <begin position="957"/>
        <end position="964"/>
    </location>
</feature>
<feature type="strand" evidence="15">
    <location>
        <begin position="967"/>
        <end position="971"/>
    </location>
</feature>
<feature type="strand" evidence="15">
    <location>
        <begin position="973"/>
        <end position="976"/>
    </location>
</feature>
<feature type="strand" evidence="15">
    <location>
        <begin position="981"/>
        <end position="989"/>
    </location>
</feature>
<feature type="strand" evidence="15">
    <location>
        <begin position="991"/>
        <end position="993"/>
    </location>
</feature>
<feature type="strand" evidence="15">
    <location>
        <begin position="995"/>
        <end position="1002"/>
    </location>
</feature>
<feature type="strand" evidence="15">
    <location>
        <begin position="1016"/>
        <end position="1029"/>
    </location>
</feature>
<feature type="strand" evidence="15">
    <location>
        <begin position="1034"/>
        <end position="1037"/>
    </location>
</feature>
<keyword id="KW-0002">3D-structure</keyword>
<keyword id="KW-0007">Acetylation</keyword>
<keyword id="KW-0025">Alternative splicing</keyword>
<keyword id="KW-0150">Chloroplast</keyword>
<keyword id="KW-1015">Disulfide bond</keyword>
<keyword id="KW-0378">Hydrolase</keyword>
<keyword id="KW-0460">Magnesium</keyword>
<keyword id="KW-0472">Membrane</keyword>
<keyword id="KW-0479">Metal-binding</keyword>
<keyword id="KW-0934">Plastid</keyword>
<keyword id="KW-1185">Reference proteome</keyword>
<keyword id="KW-0677">Repeat</keyword>
<keyword id="KW-0793">Thylakoid</keyword>
<keyword id="KW-0809">Transit peptide</keyword>
<keyword id="KW-0812">Transmembrane</keyword>
<keyword id="KW-1133">Transmembrane helix</keyword>
<proteinExistence type="evidence at protein level"/>
<accession>Q8VZ10</accession>
<accession>A0A1P8APV3</accession>
<accession>A0A1P8APY8</accession>
<accession>C0Z278</accession>
<accession>Q0WQ65</accession>
<accession>Q8GX08</accession>
<accession>Q8L9X3</accession>
<accession>Q9C7X1</accession>
<name>SOQ1_ARATH</name>
<evidence type="ECO:0000250" key="1">
    <source>
        <dbReference type="UniProtKB" id="P95649"/>
    </source>
</evidence>
<evidence type="ECO:0000250" key="2">
    <source>
        <dbReference type="UniProtKB" id="Q94K71"/>
    </source>
</evidence>
<evidence type="ECO:0000255" key="3"/>
<evidence type="ECO:0000255" key="4">
    <source>
        <dbReference type="PROSITE-ProRule" id="PRU00504"/>
    </source>
</evidence>
<evidence type="ECO:0000255" key="5">
    <source>
        <dbReference type="PROSITE-ProRule" id="PRU00691"/>
    </source>
</evidence>
<evidence type="ECO:0000269" key="6">
    <source>
    </source>
</evidence>
<evidence type="ECO:0000303" key="7">
    <source>
    </source>
</evidence>
<evidence type="ECO:0000305" key="8"/>
<evidence type="ECO:0000312" key="9">
    <source>
        <dbReference type="Araport" id="AT1G56500"/>
    </source>
</evidence>
<evidence type="ECO:0000312" key="10">
    <source>
        <dbReference type="EMBL" id="AAG51506.1"/>
    </source>
</evidence>
<evidence type="ECO:0007744" key="11">
    <source>
    </source>
</evidence>
<evidence type="ECO:0007829" key="12">
    <source>
        <dbReference type="PDB" id="7DJJ"/>
    </source>
</evidence>
<evidence type="ECO:0007829" key="13">
    <source>
        <dbReference type="PDB" id="7DJK"/>
    </source>
</evidence>
<evidence type="ECO:0007829" key="14">
    <source>
        <dbReference type="PDB" id="7DJL"/>
    </source>
</evidence>
<evidence type="ECO:0007829" key="15">
    <source>
        <dbReference type="PDB" id="7DJM"/>
    </source>
</evidence>